<comment type="function">
    <text evidence="1">Specifically methylates the uridine in position 2552 of 23S rRNA at the 2'-O position of the ribose in the fully assembled 50S ribosomal subunit.</text>
</comment>
<comment type="catalytic activity">
    <reaction evidence="1">
        <text>uridine(2552) in 23S rRNA + S-adenosyl-L-methionine = 2'-O-methyluridine(2552) in 23S rRNA + S-adenosyl-L-homocysteine + H(+)</text>
        <dbReference type="Rhea" id="RHEA:42720"/>
        <dbReference type="Rhea" id="RHEA-COMP:10202"/>
        <dbReference type="Rhea" id="RHEA-COMP:10203"/>
        <dbReference type="ChEBI" id="CHEBI:15378"/>
        <dbReference type="ChEBI" id="CHEBI:57856"/>
        <dbReference type="ChEBI" id="CHEBI:59789"/>
        <dbReference type="ChEBI" id="CHEBI:65315"/>
        <dbReference type="ChEBI" id="CHEBI:74478"/>
        <dbReference type="EC" id="2.1.1.166"/>
    </reaction>
</comment>
<comment type="subcellular location">
    <subcellularLocation>
        <location evidence="1">Cytoplasm</location>
    </subcellularLocation>
</comment>
<comment type="similarity">
    <text evidence="1">Belongs to the class I-like SAM-binding methyltransferase superfamily. RNA methyltransferase RlmE family.</text>
</comment>
<protein>
    <recommendedName>
        <fullName evidence="1">Ribosomal RNA large subunit methyltransferase E</fullName>
        <ecNumber evidence="1">2.1.1.166</ecNumber>
    </recommendedName>
    <alternativeName>
        <fullName evidence="1">23S rRNA Um2552 methyltransferase</fullName>
    </alternativeName>
    <alternativeName>
        <fullName evidence="1">rRNA (uridine-2'-O-)-methyltransferase</fullName>
    </alternativeName>
</protein>
<organism>
    <name type="scientific">Pectobacterium atrosepticum (strain SCRI 1043 / ATCC BAA-672)</name>
    <name type="common">Erwinia carotovora subsp. atroseptica</name>
    <dbReference type="NCBI Taxonomy" id="218491"/>
    <lineage>
        <taxon>Bacteria</taxon>
        <taxon>Pseudomonadati</taxon>
        <taxon>Pseudomonadota</taxon>
        <taxon>Gammaproteobacteria</taxon>
        <taxon>Enterobacterales</taxon>
        <taxon>Pectobacteriaceae</taxon>
        <taxon>Pectobacterium</taxon>
    </lineage>
</organism>
<reference key="1">
    <citation type="journal article" date="2004" name="Proc. Natl. Acad. Sci. U.S.A.">
        <title>Genome sequence of the enterobacterial phytopathogen Erwinia carotovora subsp. atroseptica and characterization of virulence factors.</title>
        <authorList>
            <person name="Bell K.S."/>
            <person name="Sebaihia M."/>
            <person name="Pritchard L."/>
            <person name="Holden M.T.G."/>
            <person name="Hyman L.J."/>
            <person name="Holeva M.C."/>
            <person name="Thomson N.R."/>
            <person name="Bentley S.D."/>
            <person name="Churcher L.J.C."/>
            <person name="Mungall K."/>
            <person name="Atkin R."/>
            <person name="Bason N."/>
            <person name="Brooks K."/>
            <person name="Chillingworth T."/>
            <person name="Clark K."/>
            <person name="Doggett J."/>
            <person name="Fraser A."/>
            <person name="Hance Z."/>
            <person name="Hauser H."/>
            <person name="Jagels K."/>
            <person name="Moule S."/>
            <person name="Norbertczak H."/>
            <person name="Ormond D."/>
            <person name="Price C."/>
            <person name="Quail M.A."/>
            <person name="Sanders M."/>
            <person name="Walker D."/>
            <person name="Whitehead S."/>
            <person name="Salmond G.P.C."/>
            <person name="Birch P.R.J."/>
            <person name="Parkhill J."/>
            <person name="Toth I.K."/>
        </authorList>
    </citation>
    <scope>NUCLEOTIDE SEQUENCE [LARGE SCALE GENOMIC DNA]</scope>
    <source>
        <strain>SCRI 1043 / ATCC BAA-672</strain>
    </source>
</reference>
<name>RLME_PECAS</name>
<evidence type="ECO:0000255" key="1">
    <source>
        <dbReference type="HAMAP-Rule" id="MF_01547"/>
    </source>
</evidence>
<accession>Q6D9B9</accession>
<sequence>MANKKRSASSSRWLQEHFSDKYVLQAQKKGLRSRAWFKLDEIQQSDKLFKPGMTVVDLGAAPGGWSQYVVTQIGGKGRIIACDILPMDPIVGVDFLQGDFRDELVLKALLERVGDSKVQVVMSDMAPNMSGTPAVDIPKSMYLVELALGMCRDVLAPGGSFLVKVFQGEGFDEYLREIRSLFTKVKIRKPDASRARSREVYIVATGRKL</sequence>
<proteinExistence type="inferred from homology"/>
<dbReference type="EC" id="2.1.1.166" evidence="1"/>
<dbReference type="EMBL" id="BX950851">
    <property type="protein sequence ID" value="CAG73611.1"/>
    <property type="molecule type" value="Genomic_DNA"/>
</dbReference>
<dbReference type="RefSeq" id="WP_011092309.1">
    <property type="nucleotide sequence ID" value="NC_004547.2"/>
</dbReference>
<dbReference type="SMR" id="Q6D9B9"/>
<dbReference type="STRING" id="218491.ECA0697"/>
<dbReference type="GeneID" id="57207431"/>
<dbReference type="KEGG" id="eca:ECA0697"/>
<dbReference type="PATRIC" id="fig|218491.5.peg.693"/>
<dbReference type="eggNOG" id="COG0293">
    <property type="taxonomic scope" value="Bacteria"/>
</dbReference>
<dbReference type="HOGENOM" id="CLU_009422_4_0_6"/>
<dbReference type="OrthoDB" id="9790080at2"/>
<dbReference type="Proteomes" id="UP000007966">
    <property type="component" value="Chromosome"/>
</dbReference>
<dbReference type="GO" id="GO:0005737">
    <property type="term" value="C:cytoplasm"/>
    <property type="evidence" value="ECO:0007669"/>
    <property type="project" value="UniProtKB-SubCell"/>
</dbReference>
<dbReference type="GO" id="GO:0008650">
    <property type="term" value="F:rRNA (uridine-2'-O-)-methyltransferase activity"/>
    <property type="evidence" value="ECO:0007669"/>
    <property type="project" value="UniProtKB-UniRule"/>
</dbReference>
<dbReference type="CDD" id="cd02440">
    <property type="entry name" value="AdoMet_MTases"/>
    <property type="match status" value="1"/>
</dbReference>
<dbReference type="FunFam" id="3.40.50.150:FF:000005">
    <property type="entry name" value="Ribosomal RNA large subunit methyltransferase E"/>
    <property type="match status" value="1"/>
</dbReference>
<dbReference type="Gene3D" id="3.40.50.150">
    <property type="entry name" value="Vaccinia Virus protein VP39"/>
    <property type="match status" value="1"/>
</dbReference>
<dbReference type="HAMAP" id="MF_01547">
    <property type="entry name" value="RNA_methyltr_E"/>
    <property type="match status" value="1"/>
</dbReference>
<dbReference type="InterPro" id="IPR050082">
    <property type="entry name" value="RNA_methyltr_RlmE"/>
</dbReference>
<dbReference type="InterPro" id="IPR002877">
    <property type="entry name" value="RNA_MeTrfase_FtsJ_dom"/>
</dbReference>
<dbReference type="InterPro" id="IPR015507">
    <property type="entry name" value="rRNA-MeTfrase_E"/>
</dbReference>
<dbReference type="InterPro" id="IPR004512">
    <property type="entry name" value="rRNA_MeTrfase_gammaproteobac"/>
</dbReference>
<dbReference type="InterPro" id="IPR029063">
    <property type="entry name" value="SAM-dependent_MTases_sf"/>
</dbReference>
<dbReference type="NCBIfam" id="NF008390">
    <property type="entry name" value="PRK11188.1"/>
    <property type="match status" value="1"/>
</dbReference>
<dbReference type="NCBIfam" id="TIGR00438">
    <property type="entry name" value="rrmJ"/>
    <property type="match status" value="1"/>
</dbReference>
<dbReference type="PANTHER" id="PTHR10920">
    <property type="entry name" value="RIBOSOMAL RNA METHYLTRANSFERASE"/>
    <property type="match status" value="1"/>
</dbReference>
<dbReference type="PANTHER" id="PTHR10920:SF18">
    <property type="entry name" value="RRNA METHYLTRANSFERASE 2, MITOCHONDRIAL"/>
    <property type="match status" value="1"/>
</dbReference>
<dbReference type="Pfam" id="PF01728">
    <property type="entry name" value="FtsJ"/>
    <property type="match status" value="1"/>
</dbReference>
<dbReference type="PIRSF" id="PIRSF005461">
    <property type="entry name" value="23S_rRNA_mtase"/>
    <property type="match status" value="1"/>
</dbReference>
<dbReference type="SUPFAM" id="SSF53335">
    <property type="entry name" value="S-adenosyl-L-methionine-dependent methyltransferases"/>
    <property type="match status" value="1"/>
</dbReference>
<keyword id="KW-0963">Cytoplasm</keyword>
<keyword id="KW-0489">Methyltransferase</keyword>
<keyword id="KW-1185">Reference proteome</keyword>
<keyword id="KW-0698">rRNA processing</keyword>
<keyword id="KW-0949">S-adenosyl-L-methionine</keyword>
<keyword id="KW-0808">Transferase</keyword>
<feature type="chain" id="PRO_0000155496" description="Ribosomal RNA large subunit methyltransferase E">
    <location>
        <begin position="1"/>
        <end position="209"/>
    </location>
</feature>
<feature type="active site" description="Proton acceptor" evidence="1">
    <location>
        <position position="164"/>
    </location>
</feature>
<feature type="binding site" evidence="1">
    <location>
        <position position="63"/>
    </location>
    <ligand>
        <name>S-adenosyl-L-methionine</name>
        <dbReference type="ChEBI" id="CHEBI:59789"/>
    </ligand>
</feature>
<feature type="binding site" evidence="1">
    <location>
        <position position="65"/>
    </location>
    <ligand>
        <name>S-adenosyl-L-methionine</name>
        <dbReference type="ChEBI" id="CHEBI:59789"/>
    </ligand>
</feature>
<feature type="binding site" evidence="1">
    <location>
        <position position="83"/>
    </location>
    <ligand>
        <name>S-adenosyl-L-methionine</name>
        <dbReference type="ChEBI" id="CHEBI:59789"/>
    </ligand>
</feature>
<feature type="binding site" evidence="1">
    <location>
        <position position="99"/>
    </location>
    <ligand>
        <name>S-adenosyl-L-methionine</name>
        <dbReference type="ChEBI" id="CHEBI:59789"/>
    </ligand>
</feature>
<feature type="binding site" evidence="1">
    <location>
        <position position="124"/>
    </location>
    <ligand>
        <name>S-adenosyl-L-methionine</name>
        <dbReference type="ChEBI" id="CHEBI:59789"/>
    </ligand>
</feature>
<gene>
    <name evidence="1" type="primary">rlmE</name>
    <name evidence="1" type="synonym">ftsJ</name>
    <name evidence="1" type="synonym">rrmJ</name>
    <name type="ordered locus">ECA0697</name>
</gene>